<organism>
    <name type="scientific">Escherichia coli O17:K52:H18 (strain UMN026 / ExPEC)</name>
    <dbReference type="NCBI Taxonomy" id="585056"/>
    <lineage>
        <taxon>Bacteria</taxon>
        <taxon>Pseudomonadati</taxon>
        <taxon>Pseudomonadota</taxon>
        <taxon>Gammaproteobacteria</taxon>
        <taxon>Enterobacterales</taxon>
        <taxon>Enterobacteriaceae</taxon>
        <taxon>Escherichia</taxon>
    </lineage>
</organism>
<sequence length="165" mass="17712">MALNLQDKQAIVAEVSEVAKGALSAVVADSRGVTVDKMTELRKAGREAGVYMRVVRNTLLRRAVEGTPFECLKDAFVGPTLIAYSMEHPGAAARLFKEFAKANAKFEVKAAAFEGELIPASQIDRLATLPTYEEAIARLMATMKEASAGKLVRTLAAVRDAKEAA</sequence>
<name>RL10_ECOLU</name>
<proteinExistence type="inferred from homology"/>
<dbReference type="EMBL" id="CU928163">
    <property type="protein sequence ID" value="CAR15632.1"/>
    <property type="molecule type" value="Genomic_DNA"/>
</dbReference>
<dbReference type="RefSeq" id="WP_001207201.1">
    <property type="nucleotide sequence ID" value="NC_011751.1"/>
</dbReference>
<dbReference type="RefSeq" id="YP_002415122.1">
    <property type="nucleotide sequence ID" value="NC_011751.1"/>
</dbReference>
<dbReference type="SMR" id="B7NFS5"/>
<dbReference type="STRING" id="585056.ECUMN_4507"/>
<dbReference type="GeneID" id="93777909"/>
<dbReference type="KEGG" id="eum:ECUMN_4507"/>
<dbReference type="PATRIC" id="fig|585056.7.peg.4678"/>
<dbReference type="HOGENOM" id="CLU_092227_0_2_6"/>
<dbReference type="Proteomes" id="UP000007097">
    <property type="component" value="Chromosome"/>
</dbReference>
<dbReference type="GO" id="GO:0015934">
    <property type="term" value="C:large ribosomal subunit"/>
    <property type="evidence" value="ECO:0007669"/>
    <property type="project" value="InterPro"/>
</dbReference>
<dbReference type="GO" id="GO:0070180">
    <property type="term" value="F:large ribosomal subunit rRNA binding"/>
    <property type="evidence" value="ECO:0007669"/>
    <property type="project" value="UniProtKB-UniRule"/>
</dbReference>
<dbReference type="GO" id="GO:0003735">
    <property type="term" value="F:structural constituent of ribosome"/>
    <property type="evidence" value="ECO:0007669"/>
    <property type="project" value="InterPro"/>
</dbReference>
<dbReference type="GO" id="GO:0006412">
    <property type="term" value="P:translation"/>
    <property type="evidence" value="ECO:0007669"/>
    <property type="project" value="UniProtKB-UniRule"/>
</dbReference>
<dbReference type="CDD" id="cd05797">
    <property type="entry name" value="Ribosomal_L10"/>
    <property type="match status" value="1"/>
</dbReference>
<dbReference type="FunFam" id="3.30.70.1730:FF:000001">
    <property type="entry name" value="50S ribosomal protein L10"/>
    <property type="match status" value="1"/>
</dbReference>
<dbReference type="Gene3D" id="3.30.70.1730">
    <property type="match status" value="1"/>
</dbReference>
<dbReference type="Gene3D" id="6.10.250.2350">
    <property type="match status" value="1"/>
</dbReference>
<dbReference type="HAMAP" id="MF_00362">
    <property type="entry name" value="Ribosomal_uL10"/>
    <property type="match status" value="1"/>
</dbReference>
<dbReference type="InterPro" id="IPR001790">
    <property type="entry name" value="Ribosomal_uL10"/>
</dbReference>
<dbReference type="InterPro" id="IPR043141">
    <property type="entry name" value="Ribosomal_uL10-like_sf"/>
</dbReference>
<dbReference type="InterPro" id="IPR022973">
    <property type="entry name" value="Ribosomal_uL10_bac"/>
</dbReference>
<dbReference type="InterPro" id="IPR047865">
    <property type="entry name" value="Ribosomal_uL10_bac_type"/>
</dbReference>
<dbReference type="InterPro" id="IPR002363">
    <property type="entry name" value="Ribosomal_uL10_CS_bac"/>
</dbReference>
<dbReference type="NCBIfam" id="NF000955">
    <property type="entry name" value="PRK00099.1-1"/>
    <property type="match status" value="1"/>
</dbReference>
<dbReference type="PANTHER" id="PTHR11560">
    <property type="entry name" value="39S RIBOSOMAL PROTEIN L10, MITOCHONDRIAL"/>
    <property type="match status" value="1"/>
</dbReference>
<dbReference type="Pfam" id="PF00466">
    <property type="entry name" value="Ribosomal_L10"/>
    <property type="match status" value="1"/>
</dbReference>
<dbReference type="SUPFAM" id="SSF160369">
    <property type="entry name" value="Ribosomal protein L10-like"/>
    <property type="match status" value="1"/>
</dbReference>
<dbReference type="PROSITE" id="PS01109">
    <property type="entry name" value="RIBOSOMAL_L10"/>
    <property type="match status" value="1"/>
</dbReference>
<keyword id="KW-0007">Acetylation</keyword>
<keyword id="KW-0687">Ribonucleoprotein</keyword>
<keyword id="KW-0689">Ribosomal protein</keyword>
<keyword id="KW-0694">RNA-binding</keyword>
<keyword id="KW-0699">rRNA-binding</keyword>
<reference key="1">
    <citation type="journal article" date="2009" name="PLoS Genet.">
        <title>Organised genome dynamics in the Escherichia coli species results in highly diverse adaptive paths.</title>
        <authorList>
            <person name="Touchon M."/>
            <person name="Hoede C."/>
            <person name="Tenaillon O."/>
            <person name="Barbe V."/>
            <person name="Baeriswyl S."/>
            <person name="Bidet P."/>
            <person name="Bingen E."/>
            <person name="Bonacorsi S."/>
            <person name="Bouchier C."/>
            <person name="Bouvet O."/>
            <person name="Calteau A."/>
            <person name="Chiapello H."/>
            <person name="Clermont O."/>
            <person name="Cruveiller S."/>
            <person name="Danchin A."/>
            <person name="Diard M."/>
            <person name="Dossat C."/>
            <person name="Karoui M.E."/>
            <person name="Frapy E."/>
            <person name="Garry L."/>
            <person name="Ghigo J.M."/>
            <person name="Gilles A.M."/>
            <person name="Johnson J."/>
            <person name="Le Bouguenec C."/>
            <person name="Lescat M."/>
            <person name="Mangenot S."/>
            <person name="Martinez-Jehanne V."/>
            <person name="Matic I."/>
            <person name="Nassif X."/>
            <person name="Oztas S."/>
            <person name="Petit M.A."/>
            <person name="Pichon C."/>
            <person name="Rouy Z."/>
            <person name="Ruf C.S."/>
            <person name="Schneider D."/>
            <person name="Tourret J."/>
            <person name="Vacherie B."/>
            <person name="Vallenet D."/>
            <person name="Medigue C."/>
            <person name="Rocha E.P.C."/>
            <person name="Denamur E."/>
        </authorList>
    </citation>
    <scope>NUCLEOTIDE SEQUENCE [LARGE SCALE GENOMIC DNA]</scope>
    <source>
        <strain>UMN026 / ExPEC</strain>
    </source>
</reference>
<comment type="function">
    <text evidence="1">Forms part of the ribosomal stalk, playing a central role in the interaction of the ribosome with GTP-bound translation factors.</text>
</comment>
<comment type="subunit">
    <text evidence="1">Part of the ribosomal stalk of the 50S ribosomal subunit. The N-terminus interacts with L11 and the large rRNA to form the base of the stalk. The C-terminus forms an elongated spine to which L12 dimers bind in a sequential fashion forming a multimeric L10(L12)X complex.</text>
</comment>
<comment type="similarity">
    <text evidence="1">Belongs to the universal ribosomal protein uL10 family.</text>
</comment>
<evidence type="ECO:0000255" key="1">
    <source>
        <dbReference type="HAMAP-Rule" id="MF_00362"/>
    </source>
</evidence>
<evidence type="ECO:0000305" key="2"/>
<gene>
    <name evidence="1" type="primary">rplJ</name>
    <name type="ordered locus">ECUMN_4507</name>
</gene>
<protein>
    <recommendedName>
        <fullName evidence="1">Large ribosomal subunit protein uL10</fullName>
    </recommendedName>
    <alternativeName>
        <fullName evidence="2">50S ribosomal protein L10</fullName>
    </alternativeName>
</protein>
<accession>B7NFS5</accession>
<feature type="chain" id="PRO_1000120957" description="Large ribosomal subunit protein uL10">
    <location>
        <begin position="1"/>
        <end position="165"/>
    </location>
</feature>
<feature type="modified residue" description="N6-acetyllysine" evidence="1">
    <location>
        <position position="37"/>
    </location>
</feature>
<feature type="modified residue" description="N6-acetyllysine" evidence="1">
    <location>
        <position position="105"/>
    </location>
</feature>